<accession>P41367</accession>
<accession>Q58XQ3</accession>
<dbReference type="EC" id="1.3.8.7" evidence="5"/>
<dbReference type="EMBL" id="U40845">
    <property type="protein sequence ID" value="AAA83759.1"/>
    <property type="molecule type" value="mRNA"/>
</dbReference>
<dbReference type="EMBL" id="AY705916">
    <property type="protein sequence ID" value="AAW30430.1"/>
    <property type="molecule type" value="mRNA"/>
</dbReference>
<dbReference type="RefSeq" id="NP_999204.1">
    <property type="nucleotide sequence ID" value="NM_214039.1"/>
</dbReference>
<dbReference type="PDB" id="1UDY">
    <property type="method" value="X-ray"/>
    <property type="resolution" value="2.40 A"/>
    <property type="chains" value="A/B/C/D=26-421"/>
</dbReference>
<dbReference type="PDB" id="3MDD">
    <property type="method" value="X-ray"/>
    <property type="resolution" value="2.40 A"/>
    <property type="chains" value="A/B=36-420"/>
</dbReference>
<dbReference type="PDB" id="3MDE">
    <property type="method" value="X-ray"/>
    <property type="resolution" value="2.40 A"/>
    <property type="chains" value="A/B=36-420"/>
</dbReference>
<dbReference type="PDBsum" id="1UDY"/>
<dbReference type="PDBsum" id="3MDD"/>
<dbReference type="PDBsum" id="3MDE"/>
<dbReference type="SMR" id="P41367"/>
<dbReference type="FunCoup" id="P41367">
    <property type="interactions" value="551"/>
</dbReference>
<dbReference type="IntAct" id="P41367">
    <property type="interactions" value="2"/>
</dbReference>
<dbReference type="STRING" id="9823.ENSSSCP00000067530"/>
<dbReference type="PaxDb" id="9823-ENSSSCP00000004085"/>
<dbReference type="PeptideAtlas" id="P41367"/>
<dbReference type="Ensembl" id="ENSSSCT00000061492.3">
    <property type="protein sequence ID" value="ENSSSCP00000046096.3"/>
    <property type="gene ID" value="ENSSSCG00000003776.5"/>
</dbReference>
<dbReference type="Ensembl" id="ENSSSCT00025019283.1">
    <property type="protein sequence ID" value="ENSSSCP00025007814.1"/>
    <property type="gene ID" value="ENSSSCG00025014343.1"/>
</dbReference>
<dbReference type="Ensembl" id="ENSSSCT00070034689.1">
    <property type="protein sequence ID" value="ENSSSCP00070028978.1"/>
    <property type="gene ID" value="ENSSSCG00070017536.1"/>
</dbReference>
<dbReference type="Ensembl" id="ENSSSCT00105063891">
    <property type="protein sequence ID" value="ENSSSCP00105045437"/>
    <property type="gene ID" value="ENSSSCG00105033396"/>
</dbReference>
<dbReference type="Ensembl" id="ENSSSCT00110003824">
    <property type="protein sequence ID" value="ENSSSCP00110002985"/>
    <property type="gene ID" value="ENSSSCG00110001453"/>
</dbReference>
<dbReference type="Ensembl" id="ENSSSCT00115014287">
    <property type="protein sequence ID" value="ENSSSCP00115013495"/>
    <property type="gene ID" value="ENSSSCG00115007849"/>
</dbReference>
<dbReference type="GeneID" id="397104"/>
<dbReference type="KEGG" id="ssc:397104"/>
<dbReference type="CTD" id="34"/>
<dbReference type="VGNC" id="VGNC:85000">
    <property type="gene designation" value="ACADM"/>
</dbReference>
<dbReference type="eggNOG" id="KOG0140">
    <property type="taxonomic scope" value="Eukaryota"/>
</dbReference>
<dbReference type="GeneTree" id="ENSGT00940000158429"/>
<dbReference type="HOGENOM" id="CLU_018204_0_2_1"/>
<dbReference type="InParanoid" id="P41367"/>
<dbReference type="OMA" id="NYDKMGV"/>
<dbReference type="OrthoDB" id="434771at2759"/>
<dbReference type="TreeFam" id="TF105020"/>
<dbReference type="BRENDA" id="1.3.8.7">
    <property type="organism ID" value="6170"/>
</dbReference>
<dbReference type="Reactome" id="R-SSC-77288">
    <property type="pathway name" value="mitochondrial fatty acid beta-oxidation of unsaturated fatty acids"/>
</dbReference>
<dbReference type="Reactome" id="R-SSC-77346">
    <property type="pathway name" value="Beta oxidation of decanoyl-CoA to octanoyl-CoA-CoA"/>
</dbReference>
<dbReference type="Reactome" id="R-SSC-77348">
    <property type="pathway name" value="Beta oxidation of octanoyl-CoA to hexanoyl-CoA"/>
</dbReference>
<dbReference type="SABIO-RK" id="P41367"/>
<dbReference type="UniPathway" id="UPA00660"/>
<dbReference type="EvolutionaryTrace" id="P41367"/>
<dbReference type="Proteomes" id="UP000008227">
    <property type="component" value="Chromosome 6"/>
</dbReference>
<dbReference type="Proteomes" id="UP000314985">
    <property type="component" value="Chromosome 6"/>
</dbReference>
<dbReference type="Proteomes" id="UP000694570">
    <property type="component" value="Unplaced"/>
</dbReference>
<dbReference type="Proteomes" id="UP000694571">
    <property type="component" value="Unplaced"/>
</dbReference>
<dbReference type="Proteomes" id="UP000694720">
    <property type="component" value="Unplaced"/>
</dbReference>
<dbReference type="Proteomes" id="UP000694722">
    <property type="component" value="Unplaced"/>
</dbReference>
<dbReference type="Proteomes" id="UP000694723">
    <property type="component" value="Unplaced"/>
</dbReference>
<dbReference type="Proteomes" id="UP000694724">
    <property type="component" value="Unplaced"/>
</dbReference>
<dbReference type="Proteomes" id="UP000694725">
    <property type="component" value="Unplaced"/>
</dbReference>
<dbReference type="Proteomes" id="UP000694726">
    <property type="component" value="Unplaced"/>
</dbReference>
<dbReference type="Proteomes" id="UP000694727">
    <property type="component" value="Unplaced"/>
</dbReference>
<dbReference type="Proteomes" id="UP000694728">
    <property type="component" value="Unplaced"/>
</dbReference>
<dbReference type="GO" id="GO:0030424">
    <property type="term" value="C:axon"/>
    <property type="evidence" value="ECO:0007669"/>
    <property type="project" value="Ensembl"/>
</dbReference>
<dbReference type="GO" id="GO:0005759">
    <property type="term" value="C:mitochondrial matrix"/>
    <property type="evidence" value="ECO:0007669"/>
    <property type="project" value="UniProtKB-SubCell"/>
</dbReference>
<dbReference type="GO" id="GO:0031966">
    <property type="term" value="C:mitochondrial membrane"/>
    <property type="evidence" value="ECO:0007669"/>
    <property type="project" value="Ensembl"/>
</dbReference>
<dbReference type="GO" id="GO:0003995">
    <property type="term" value="F:acyl-CoA dehydrogenase activity"/>
    <property type="evidence" value="ECO:0000250"/>
    <property type="project" value="UniProtKB"/>
</dbReference>
<dbReference type="GO" id="GO:0050660">
    <property type="term" value="F:flavin adenine dinucleotide binding"/>
    <property type="evidence" value="ECO:0007669"/>
    <property type="project" value="InterPro"/>
</dbReference>
<dbReference type="GO" id="GO:0042802">
    <property type="term" value="F:identical protein binding"/>
    <property type="evidence" value="ECO:0007669"/>
    <property type="project" value="Ensembl"/>
</dbReference>
<dbReference type="GO" id="GO:0070991">
    <property type="term" value="F:medium-chain fatty acyl-CoA dehydrogenase activity"/>
    <property type="evidence" value="ECO:0007669"/>
    <property type="project" value="UniProtKB-EC"/>
</dbReference>
<dbReference type="GO" id="GO:0055007">
    <property type="term" value="P:cardiac muscle cell differentiation"/>
    <property type="evidence" value="ECO:0007669"/>
    <property type="project" value="Ensembl"/>
</dbReference>
<dbReference type="GO" id="GO:0045329">
    <property type="term" value="P:carnitine biosynthetic process"/>
    <property type="evidence" value="ECO:0007669"/>
    <property type="project" value="Ensembl"/>
</dbReference>
<dbReference type="GO" id="GO:0019254">
    <property type="term" value="P:carnitine metabolic process, CoA-linked"/>
    <property type="evidence" value="ECO:0007669"/>
    <property type="project" value="Ensembl"/>
</dbReference>
<dbReference type="GO" id="GO:0006635">
    <property type="term" value="P:fatty acid beta-oxidation"/>
    <property type="evidence" value="ECO:0000250"/>
    <property type="project" value="UniProtKB"/>
</dbReference>
<dbReference type="GO" id="GO:0033539">
    <property type="term" value="P:fatty acid beta-oxidation using acyl-CoA dehydrogenase"/>
    <property type="evidence" value="ECO:0000250"/>
    <property type="project" value="UniProtKB"/>
</dbReference>
<dbReference type="GO" id="GO:0005978">
    <property type="term" value="P:glycogen biosynthetic process"/>
    <property type="evidence" value="ECO:0007669"/>
    <property type="project" value="Ensembl"/>
</dbReference>
<dbReference type="GO" id="GO:0001889">
    <property type="term" value="P:liver development"/>
    <property type="evidence" value="ECO:0007669"/>
    <property type="project" value="Ensembl"/>
</dbReference>
<dbReference type="GO" id="GO:0051793">
    <property type="term" value="P:medium-chain fatty acid catabolic process"/>
    <property type="evidence" value="ECO:0007669"/>
    <property type="project" value="Ensembl"/>
</dbReference>
<dbReference type="GO" id="GO:0009791">
    <property type="term" value="P:post-embryonic development"/>
    <property type="evidence" value="ECO:0007669"/>
    <property type="project" value="Ensembl"/>
</dbReference>
<dbReference type="GO" id="GO:0006111">
    <property type="term" value="P:regulation of gluconeogenesis"/>
    <property type="evidence" value="ECO:0007669"/>
    <property type="project" value="Ensembl"/>
</dbReference>
<dbReference type="GO" id="GO:0009409">
    <property type="term" value="P:response to cold"/>
    <property type="evidence" value="ECO:0007669"/>
    <property type="project" value="Ensembl"/>
</dbReference>
<dbReference type="GO" id="GO:0042594">
    <property type="term" value="P:response to starvation"/>
    <property type="evidence" value="ECO:0007669"/>
    <property type="project" value="Ensembl"/>
</dbReference>
<dbReference type="CDD" id="cd01157">
    <property type="entry name" value="MCAD"/>
    <property type="match status" value="1"/>
</dbReference>
<dbReference type="FunFam" id="1.10.540.10:FF:000010">
    <property type="entry name" value="Medium-chain specific acyl-CoA dehydrogenase, mitochondrial"/>
    <property type="match status" value="1"/>
</dbReference>
<dbReference type="FunFam" id="1.20.140.10:FF:000011">
    <property type="entry name" value="Medium-chain specific acyl-CoA dehydrogenase, mitochondrial"/>
    <property type="match status" value="1"/>
</dbReference>
<dbReference type="FunFam" id="2.40.110.10:FF:000007">
    <property type="entry name" value="Medium-chain specific acyl-CoA dehydrogenase, mitochondrial"/>
    <property type="match status" value="1"/>
</dbReference>
<dbReference type="Gene3D" id="1.10.540.10">
    <property type="entry name" value="Acyl-CoA dehydrogenase/oxidase, N-terminal domain"/>
    <property type="match status" value="1"/>
</dbReference>
<dbReference type="Gene3D" id="2.40.110.10">
    <property type="entry name" value="Butyryl-CoA Dehydrogenase, subunit A, domain 2"/>
    <property type="match status" value="1"/>
</dbReference>
<dbReference type="Gene3D" id="1.20.140.10">
    <property type="entry name" value="Butyryl-CoA Dehydrogenase, subunit A, domain 3"/>
    <property type="match status" value="1"/>
</dbReference>
<dbReference type="InterPro" id="IPR050741">
    <property type="entry name" value="Acyl-CoA_dehydrogenase"/>
</dbReference>
<dbReference type="InterPro" id="IPR006089">
    <property type="entry name" value="Acyl-CoA_DH_CS"/>
</dbReference>
<dbReference type="InterPro" id="IPR006091">
    <property type="entry name" value="Acyl-CoA_Oxase/DH_mid-dom"/>
</dbReference>
<dbReference type="InterPro" id="IPR046373">
    <property type="entry name" value="Acyl-CoA_Oxase/DH_mid-dom_sf"/>
</dbReference>
<dbReference type="InterPro" id="IPR036250">
    <property type="entry name" value="AcylCo_DH-like_C"/>
</dbReference>
<dbReference type="InterPro" id="IPR009075">
    <property type="entry name" value="AcylCo_DH/oxidase_C"/>
</dbReference>
<dbReference type="InterPro" id="IPR013786">
    <property type="entry name" value="AcylCoA_DH/ox_N"/>
</dbReference>
<dbReference type="InterPro" id="IPR037069">
    <property type="entry name" value="AcylCoA_DH/ox_N_sf"/>
</dbReference>
<dbReference type="InterPro" id="IPR009100">
    <property type="entry name" value="AcylCoA_DH/oxidase_NM_dom_sf"/>
</dbReference>
<dbReference type="InterPro" id="IPR034180">
    <property type="entry name" value="MCAD"/>
</dbReference>
<dbReference type="PANTHER" id="PTHR48083:SF2">
    <property type="entry name" value="MEDIUM-CHAIN SPECIFIC ACYL-COA DEHYDROGENASE, MITOCHONDRIAL"/>
    <property type="match status" value="1"/>
</dbReference>
<dbReference type="PANTHER" id="PTHR48083">
    <property type="entry name" value="MEDIUM-CHAIN SPECIFIC ACYL-COA DEHYDROGENASE, MITOCHONDRIAL-RELATED"/>
    <property type="match status" value="1"/>
</dbReference>
<dbReference type="Pfam" id="PF00441">
    <property type="entry name" value="Acyl-CoA_dh_1"/>
    <property type="match status" value="1"/>
</dbReference>
<dbReference type="Pfam" id="PF02770">
    <property type="entry name" value="Acyl-CoA_dh_M"/>
    <property type="match status" value="1"/>
</dbReference>
<dbReference type="Pfam" id="PF02771">
    <property type="entry name" value="Acyl-CoA_dh_N"/>
    <property type="match status" value="1"/>
</dbReference>
<dbReference type="PIRSF" id="PIRSF016578">
    <property type="entry name" value="HsaA"/>
    <property type="match status" value="1"/>
</dbReference>
<dbReference type="SUPFAM" id="SSF47203">
    <property type="entry name" value="Acyl-CoA dehydrogenase C-terminal domain-like"/>
    <property type="match status" value="1"/>
</dbReference>
<dbReference type="SUPFAM" id="SSF56645">
    <property type="entry name" value="Acyl-CoA dehydrogenase NM domain-like"/>
    <property type="match status" value="1"/>
</dbReference>
<dbReference type="PROSITE" id="PS00072">
    <property type="entry name" value="ACYL_COA_DH_1"/>
    <property type="match status" value="1"/>
</dbReference>
<dbReference type="PROSITE" id="PS00073">
    <property type="entry name" value="ACYL_COA_DH_2"/>
    <property type="match status" value="1"/>
</dbReference>
<proteinExistence type="evidence at protein level"/>
<organism>
    <name type="scientific">Sus scrofa</name>
    <name type="common">Pig</name>
    <dbReference type="NCBI Taxonomy" id="9823"/>
    <lineage>
        <taxon>Eukaryota</taxon>
        <taxon>Metazoa</taxon>
        <taxon>Chordata</taxon>
        <taxon>Craniata</taxon>
        <taxon>Vertebrata</taxon>
        <taxon>Euteleostomi</taxon>
        <taxon>Mammalia</taxon>
        <taxon>Eutheria</taxon>
        <taxon>Laurasiatheria</taxon>
        <taxon>Artiodactyla</taxon>
        <taxon>Suina</taxon>
        <taxon>Suidae</taxon>
        <taxon>Sus</taxon>
    </lineage>
</organism>
<keyword id="KW-0002">3D-structure</keyword>
<keyword id="KW-0007">Acetylation</keyword>
<keyword id="KW-0903">Direct protein sequencing</keyword>
<keyword id="KW-0274">FAD</keyword>
<keyword id="KW-0276">Fatty acid metabolism</keyword>
<keyword id="KW-0285">Flavoprotein</keyword>
<keyword id="KW-0443">Lipid metabolism</keyword>
<keyword id="KW-0496">Mitochondrion</keyword>
<keyword id="KW-0560">Oxidoreductase</keyword>
<keyword id="KW-0597">Phosphoprotein</keyword>
<keyword id="KW-1185">Reference proteome</keyword>
<keyword id="KW-0809">Transit peptide</keyword>
<comment type="function">
    <text evidence="2 5">Medium-chain specific acyl-CoA dehydrogenase is one of the acyl-CoA dehydrogenases that catalyze the first step of mitochondrial fatty acid beta-oxidation, an aerobic process breaking down fatty acids into acetyl-CoA and allowing the production of energy from fats (PubMed:3233192). The first step of fatty acid beta-oxidation consists in the removal of one hydrogen from C-2 and C-3 of the straight-chain fatty acyl-CoA thioester, resulting in the formation of trans-2-enoyl-CoA (PubMed:3233192). Electron transfer flavoprotein (ETF) is the electron acceptor that transfers electrons to the main mitochondrial respiratory chain via ETF-ubiquinone oxidoreductase (ETF dehydrogenase) (By similarity). Among the different mitochondrial acyl-CoA dehydrogenases, medium-chain specific acyl-CoA dehydrogenase acts specifically on acyl-CoAs with saturated 6 to 12 carbons long primary chains (By similarity).</text>
</comment>
<comment type="catalytic activity">
    <reaction evidence="5">
        <text>a medium-chain 2,3-saturated fatty acyl-CoA + oxidized [electron-transfer flavoprotein] + H(+) = a medium-chain (2E)-enoyl-CoA + reduced [electron-transfer flavoprotein]</text>
        <dbReference type="Rhea" id="RHEA:14477"/>
        <dbReference type="Rhea" id="RHEA-COMP:10685"/>
        <dbReference type="Rhea" id="RHEA-COMP:10686"/>
        <dbReference type="ChEBI" id="CHEBI:15378"/>
        <dbReference type="ChEBI" id="CHEBI:57692"/>
        <dbReference type="ChEBI" id="CHEBI:58307"/>
        <dbReference type="ChEBI" id="CHEBI:83723"/>
        <dbReference type="ChEBI" id="CHEBI:83726"/>
        <dbReference type="EC" id="1.3.8.7"/>
    </reaction>
    <physiologicalReaction direction="left-to-right" evidence="10">
        <dbReference type="Rhea" id="RHEA:14478"/>
    </physiologicalReaction>
</comment>
<comment type="catalytic activity">
    <reaction evidence="1">
        <text>pentanoyl-CoA + oxidized [electron-transfer flavoprotein] + H(+) = (2E)-pentenoyl-CoA + reduced [electron-transfer flavoprotein]</text>
        <dbReference type="Rhea" id="RHEA:43456"/>
        <dbReference type="Rhea" id="RHEA-COMP:10685"/>
        <dbReference type="Rhea" id="RHEA-COMP:10686"/>
        <dbReference type="ChEBI" id="CHEBI:15378"/>
        <dbReference type="ChEBI" id="CHEBI:57389"/>
        <dbReference type="ChEBI" id="CHEBI:57692"/>
        <dbReference type="ChEBI" id="CHEBI:58307"/>
        <dbReference type="ChEBI" id="CHEBI:86160"/>
    </reaction>
    <physiologicalReaction direction="left-to-right" evidence="1">
        <dbReference type="Rhea" id="RHEA:43457"/>
    </physiologicalReaction>
</comment>
<comment type="catalytic activity">
    <reaction evidence="2">
        <text>hexanoyl-CoA + oxidized [electron-transfer flavoprotein] + H(+) = (2E)-hexenoyl-CoA + reduced [electron-transfer flavoprotein]</text>
        <dbReference type="Rhea" id="RHEA:43464"/>
        <dbReference type="Rhea" id="RHEA-COMP:10685"/>
        <dbReference type="Rhea" id="RHEA-COMP:10686"/>
        <dbReference type="ChEBI" id="CHEBI:15378"/>
        <dbReference type="ChEBI" id="CHEBI:57692"/>
        <dbReference type="ChEBI" id="CHEBI:58307"/>
        <dbReference type="ChEBI" id="CHEBI:62077"/>
        <dbReference type="ChEBI" id="CHEBI:62620"/>
    </reaction>
    <physiologicalReaction direction="left-to-right" evidence="2">
        <dbReference type="Rhea" id="RHEA:43465"/>
    </physiologicalReaction>
</comment>
<comment type="catalytic activity">
    <reaction evidence="5">
        <text>octanoyl-CoA + oxidized [electron-transfer flavoprotein] + H(+) = (2E)-octenoyl-CoA + reduced [electron-transfer flavoprotein]</text>
        <dbReference type="Rhea" id="RHEA:48180"/>
        <dbReference type="Rhea" id="RHEA-COMP:10685"/>
        <dbReference type="Rhea" id="RHEA-COMP:10686"/>
        <dbReference type="ChEBI" id="CHEBI:15378"/>
        <dbReference type="ChEBI" id="CHEBI:57386"/>
        <dbReference type="ChEBI" id="CHEBI:57692"/>
        <dbReference type="ChEBI" id="CHEBI:58307"/>
        <dbReference type="ChEBI" id="CHEBI:62242"/>
    </reaction>
    <physiologicalReaction direction="left-to-right" evidence="10">
        <dbReference type="Rhea" id="RHEA:48181"/>
    </physiologicalReaction>
</comment>
<comment type="catalytic activity">
    <reaction evidence="2">
        <text>decanoyl-CoA + oxidized [electron-transfer flavoprotein] + H(+) = (2E)-decenoyl-CoA + reduced [electron-transfer flavoprotein]</text>
        <dbReference type="Rhea" id="RHEA:48176"/>
        <dbReference type="Rhea" id="RHEA-COMP:10685"/>
        <dbReference type="Rhea" id="RHEA-COMP:10686"/>
        <dbReference type="ChEBI" id="CHEBI:15378"/>
        <dbReference type="ChEBI" id="CHEBI:57692"/>
        <dbReference type="ChEBI" id="CHEBI:58307"/>
        <dbReference type="ChEBI" id="CHEBI:61406"/>
        <dbReference type="ChEBI" id="CHEBI:61430"/>
    </reaction>
    <physiologicalReaction direction="left-to-right" evidence="2">
        <dbReference type="Rhea" id="RHEA:48177"/>
    </physiologicalReaction>
</comment>
<comment type="catalytic activity">
    <reaction evidence="2">
        <text>dodecanoyl-CoA + oxidized [electron-transfer flavoprotein] + H(+) = (2E)-dodecenoyl-CoA + reduced [electron-transfer flavoprotein]</text>
        <dbReference type="Rhea" id="RHEA:47296"/>
        <dbReference type="Rhea" id="RHEA-COMP:10685"/>
        <dbReference type="Rhea" id="RHEA-COMP:10686"/>
        <dbReference type="ChEBI" id="CHEBI:15378"/>
        <dbReference type="ChEBI" id="CHEBI:57330"/>
        <dbReference type="ChEBI" id="CHEBI:57375"/>
        <dbReference type="ChEBI" id="CHEBI:57692"/>
        <dbReference type="ChEBI" id="CHEBI:58307"/>
    </reaction>
    <physiologicalReaction direction="left-to-right" evidence="2">
        <dbReference type="Rhea" id="RHEA:47297"/>
    </physiologicalReaction>
</comment>
<comment type="catalytic activity">
    <reaction evidence="2">
        <text>tetradecanoyl-CoA + oxidized [electron-transfer flavoprotein] + H(+) = (2E)-tetradecenoyl-CoA + reduced [electron-transfer flavoprotein]</text>
        <dbReference type="Rhea" id="RHEA:47316"/>
        <dbReference type="Rhea" id="RHEA-COMP:10685"/>
        <dbReference type="Rhea" id="RHEA-COMP:10686"/>
        <dbReference type="ChEBI" id="CHEBI:15378"/>
        <dbReference type="ChEBI" id="CHEBI:57385"/>
        <dbReference type="ChEBI" id="CHEBI:57692"/>
        <dbReference type="ChEBI" id="CHEBI:58307"/>
        <dbReference type="ChEBI" id="CHEBI:61405"/>
    </reaction>
    <physiologicalReaction direction="left-to-right" evidence="2">
        <dbReference type="Rhea" id="RHEA:47317"/>
    </physiologicalReaction>
</comment>
<comment type="catalytic activity">
    <reaction evidence="2">
        <text>oxidized [electron-transfer flavoprotein] + hexadecanoyl-CoA + H(+) = (2E)-hexadecenoyl-CoA + reduced [electron-transfer flavoprotein]</text>
        <dbReference type="Rhea" id="RHEA:43448"/>
        <dbReference type="Rhea" id="RHEA-COMP:10685"/>
        <dbReference type="Rhea" id="RHEA-COMP:10686"/>
        <dbReference type="ChEBI" id="CHEBI:15378"/>
        <dbReference type="ChEBI" id="CHEBI:57379"/>
        <dbReference type="ChEBI" id="CHEBI:57692"/>
        <dbReference type="ChEBI" id="CHEBI:58307"/>
        <dbReference type="ChEBI" id="CHEBI:61526"/>
    </reaction>
    <physiologicalReaction direction="left-to-right" evidence="2">
        <dbReference type="Rhea" id="RHEA:43449"/>
    </physiologicalReaction>
</comment>
<comment type="cofactor">
    <cofactor evidence="4 6">
        <name>FAD</name>
        <dbReference type="ChEBI" id="CHEBI:57692"/>
    </cofactor>
</comment>
<comment type="pathway">
    <text evidence="10">Lipid metabolism; mitochondrial fatty acid beta-oxidation.</text>
</comment>
<comment type="subunit">
    <text evidence="2 4">Homotetramer (PubMed:12966080). Interacts with the heterodimeric electron transfer flavoprotein ETF (By similarity).</text>
</comment>
<comment type="subcellular location">
    <subcellularLocation>
        <location evidence="1">Mitochondrion matrix</location>
    </subcellularLocation>
</comment>
<comment type="PTM">
    <text evidence="2">Acetylated. Could occur at proximity of the cofactor-binding sites and reduce the catalytic activity. Could be deacetylated by SIRT3.</text>
</comment>
<comment type="similarity">
    <text evidence="9">Belongs to the acyl-CoA dehydrogenase family.</text>
</comment>
<name>ACADM_PIG</name>
<sequence length="421" mass="46485">MAAMFRRSCRVLRSLSHFGWRSQHTKAVPQCEPGSGFSFELTEQQKEFQATARKFAREEIIPVAAEYDRTGEYPVPLLKRAWELGLMNTHIPESFGGLGLGIIDSCLITEELAYGCTGVQTAIEANTLGQVPLIIGGNYQQQKKYLGRMTEEPLMCAYCVTEPGAGSDVAGIKTKAEKKGDEYIINGQKMWITNGGKANWYFLLARSDPDPKAPASKAFTGFIVEADTPGVQIGRKEINMGQRCSDTRGIVFEDVRVPKENVLTGEGAGFKIAMGTFDKTRPPVAAGAVGLAQRALDEATKYALERKTFGKLLAEHQGISFLLADMAMKVELARLSYQRAAWEIDSGRRNTYYASIAKAYAADIANQLATDAVQVFGGNGFNTEYPVEKLMRDAKIYQIYEGTAQIQRIIIAREHIGRYKN</sequence>
<evidence type="ECO:0000250" key="1">
    <source>
        <dbReference type="UniProtKB" id="P08503"/>
    </source>
</evidence>
<evidence type="ECO:0000250" key="2">
    <source>
        <dbReference type="UniProtKB" id="P11310"/>
    </source>
</evidence>
<evidence type="ECO:0000250" key="3">
    <source>
        <dbReference type="UniProtKB" id="P45952"/>
    </source>
</evidence>
<evidence type="ECO:0000269" key="4">
    <source>
    </source>
</evidence>
<evidence type="ECO:0000269" key="5">
    <source>
    </source>
</evidence>
<evidence type="ECO:0000269" key="6">
    <source>
    </source>
</evidence>
<evidence type="ECO:0000303" key="7">
    <source>
    </source>
</evidence>
<evidence type="ECO:0000303" key="8">
    <source>
    </source>
</evidence>
<evidence type="ECO:0000305" key="9"/>
<evidence type="ECO:0000305" key="10">
    <source>
    </source>
</evidence>
<evidence type="ECO:0000305" key="11">
    <source>
    </source>
</evidence>
<evidence type="ECO:0007744" key="12">
    <source>
        <dbReference type="PDB" id="1UDY"/>
    </source>
</evidence>
<evidence type="ECO:0007744" key="13">
    <source>
        <dbReference type="PDB" id="3MDD"/>
    </source>
</evidence>
<evidence type="ECO:0007744" key="14">
    <source>
        <dbReference type="PDB" id="3MDE"/>
    </source>
</evidence>
<evidence type="ECO:0007829" key="15">
    <source>
        <dbReference type="PDB" id="1UDY"/>
    </source>
</evidence>
<evidence type="ECO:0007829" key="16">
    <source>
        <dbReference type="PDB" id="3MDD"/>
    </source>
</evidence>
<feature type="transit peptide" description="Mitochondrion" evidence="1">
    <location>
        <begin position="1"/>
        <end position="25"/>
    </location>
</feature>
<feature type="chain" id="PRO_0000000505" description="Medium-chain specific acyl-CoA dehydrogenase, mitochondrial">
    <location>
        <begin position="26"/>
        <end position="421"/>
    </location>
</feature>
<feature type="active site" description="Proton acceptor" evidence="4 6">
    <location>
        <position position="401"/>
    </location>
</feature>
<feature type="binding site" description="in other chain" evidence="4 6 12 13 14">
    <location>
        <begin position="158"/>
        <end position="167"/>
    </location>
    <ligand>
        <name>FAD</name>
        <dbReference type="ChEBI" id="CHEBI:57692"/>
        <note>ligand shared between dimeric partners</note>
    </ligand>
</feature>
<feature type="binding site" evidence="6 14">
    <location>
        <position position="167"/>
    </location>
    <ligand>
        <name>octanoyl-CoA</name>
        <dbReference type="ChEBI" id="CHEBI:57386"/>
    </ligand>
</feature>
<feature type="binding site" description="in other chain" evidence="4 6 12 13 14">
    <location>
        <begin position="191"/>
        <end position="193"/>
    </location>
    <ligand>
        <name>FAD</name>
        <dbReference type="ChEBI" id="CHEBI:57692"/>
        <note>ligand shared between dimeric partners</note>
    </ligand>
</feature>
<feature type="binding site" evidence="6 14">
    <location>
        <position position="216"/>
    </location>
    <ligand>
        <name>octanoyl-CoA</name>
        <dbReference type="ChEBI" id="CHEBI:57386"/>
    </ligand>
</feature>
<feature type="binding site" evidence="6 14">
    <location>
        <position position="278"/>
    </location>
    <ligand>
        <name>octanoyl-CoA</name>
        <dbReference type="ChEBI" id="CHEBI:57386"/>
    </ligand>
</feature>
<feature type="binding site" evidence="6 14">
    <location>
        <position position="281"/>
    </location>
    <ligand>
        <name>octanoyl-CoA</name>
        <dbReference type="ChEBI" id="CHEBI:57386"/>
    </ligand>
</feature>
<feature type="binding site" evidence="4 6 12 13 14">
    <location>
        <begin position="306"/>
        <end position="308"/>
    </location>
    <ligand>
        <name>FAD</name>
        <dbReference type="ChEBI" id="CHEBI:57692"/>
        <note>ligand shared between dimeric partners</note>
    </ligand>
</feature>
<feature type="binding site" description="in other chain" evidence="4 6 12 13 14">
    <location>
        <begin position="316"/>
        <end position="317"/>
    </location>
    <ligand>
        <name>FAD</name>
        <dbReference type="ChEBI" id="CHEBI:57692"/>
        <note>ligand shared between dimeric partners</note>
    </ligand>
</feature>
<feature type="binding site" evidence="6 14">
    <location>
        <position position="349"/>
    </location>
    <ligand>
        <name>octanoyl-CoA</name>
        <dbReference type="ChEBI" id="CHEBI:57386"/>
    </ligand>
</feature>
<feature type="binding site" evidence="6 14">
    <location>
        <position position="351"/>
    </location>
    <ligand>
        <name>octanoyl-CoA</name>
        <dbReference type="ChEBI" id="CHEBI:57386"/>
    </ligand>
</feature>
<feature type="binding site" evidence="6">
    <location>
        <begin position="374"/>
        <end position="378"/>
    </location>
    <ligand>
        <name>FAD</name>
        <dbReference type="ChEBI" id="CHEBI:57692"/>
        <note>ligand shared between dimeric partners</note>
    </ligand>
</feature>
<feature type="binding site" evidence="6 14">
    <location>
        <position position="401"/>
    </location>
    <ligand>
        <name>octanoyl-CoA</name>
        <dbReference type="ChEBI" id="CHEBI:57386"/>
    </ligand>
</feature>
<feature type="binding site" description="in other chain" evidence="4 6 12 13 14">
    <location>
        <begin position="402"/>
        <end position="405"/>
    </location>
    <ligand>
        <name>FAD</name>
        <dbReference type="ChEBI" id="CHEBI:57692"/>
        <note>ligand shared between dimeric partners</note>
    </ligand>
</feature>
<feature type="modified residue" description="N6-acetyllysine" evidence="3">
    <location>
        <position position="79"/>
    </location>
</feature>
<feature type="modified residue" description="N6-succinyllysine" evidence="3">
    <location>
        <position position="179"/>
    </location>
</feature>
<feature type="modified residue" description="N6-acetyllysine; alternate" evidence="3">
    <location>
        <position position="212"/>
    </location>
</feature>
<feature type="modified residue" description="N6-succinyllysine; alternate" evidence="3">
    <location>
        <position position="212"/>
    </location>
</feature>
<feature type="modified residue" description="N6-acetyllysine; alternate" evidence="3">
    <location>
        <position position="217"/>
    </location>
</feature>
<feature type="modified residue" description="N6-succinyllysine; alternate" evidence="3">
    <location>
        <position position="217"/>
    </location>
</feature>
<feature type="modified residue" description="N6-acetyllysine; alternate" evidence="3">
    <location>
        <position position="259"/>
    </location>
</feature>
<feature type="modified residue" description="N6-succinyllysine; alternate" evidence="3">
    <location>
        <position position="259"/>
    </location>
</feature>
<feature type="modified residue" description="N6-acetyllysine; alternate" evidence="3">
    <location>
        <position position="271"/>
    </location>
</feature>
<feature type="modified residue" description="N6-succinyllysine; alternate" evidence="3">
    <location>
        <position position="271"/>
    </location>
</feature>
<feature type="modified residue" description="N6-acetyllysine" evidence="2">
    <location>
        <position position="279"/>
    </location>
</feature>
<feature type="modified residue" description="N6-acetyllysine" evidence="2">
    <location>
        <position position="301"/>
    </location>
</feature>
<feature type="modified residue" description="Phosphothreonine" evidence="3">
    <location>
        <position position="351"/>
    </location>
</feature>
<feature type="sequence conflict" description="In Ref. 1; AAA83759." evidence="9" ref="1">
    <original>S</original>
    <variation>G</variation>
    <location>
        <position position="8"/>
    </location>
</feature>
<feature type="sequence conflict" description="In Ref. 1; AAA83759." evidence="9" ref="1">
    <original>E</original>
    <variation>K</variation>
    <location>
        <position position="40"/>
    </location>
</feature>
<feature type="sequence conflict" description="In Ref. 1; AAA83759." evidence="9" ref="1">
    <original>P</original>
    <variation>S</variation>
    <location>
        <position position="283"/>
    </location>
</feature>
<feature type="sequence conflict" description="In Ref. 1; AAA83759." evidence="9" ref="1">
    <original>E</original>
    <variation>G</variation>
    <location>
        <position position="305"/>
    </location>
</feature>
<feature type="sequence conflict" description="In Ref. 1; AAA83759." evidence="9" ref="1">
    <original>E</original>
    <variation>D</variation>
    <location>
        <position position="331"/>
    </location>
</feature>
<feature type="helix" evidence="15">
    <location>
        <begin position="43"/>
        <end position="58"/>
    </location>
</feature>
<feature type="helix" evidence="15">
    <location>
        <begin position="61"/>
        <end position="70"/>
    </location>
</feature>
<feature type="helix" evidence="15">
    <location>
        <begin position="75"/>
        <end position="83"/>
    </location>
</feature>
<feature type="helix" evidence="15">
    <location>
        <begin position="93"/>
        <end position="95"/>
    </location>
</feature>
<feature type="helix" evidence="15">
    <location>
        <begin position="102"/>
        <end position="115"/>
    </location>
</feature>
<feature type="helix" evidence="15">
    <location>
        <begin position="117"/>
        <end position="136"/>
    </location>
</feature>
<feature type="helix" evidence="15">
    <location>
        <begin position="139"/>
        <end position="151"/>
    </location>
</feature>
<feature type="strand" evidence="15">
    <location>
        <begin position="156"/>
        <end position="159"/>
    </location>
</feature>
<feature type="strand" evidence="16">
    <location>
        <begin position="165"/>
        <end position="167"/>
    </location>
</feature>
<feature type="helix" evidence="15">
    <location>
        <begin position="169"/>
        <end position="171"/>
    </location>
</feature>
<feature type="strand" evidence="15">
    <location>
        <begin position="175"/>
        <end position="178"/>
    </location>
</feature>
<feature type="strand" evidence="15">
    <location>
        <begin position="180"/>
        <end position="193"/>
    </location>
</feature>
<feature type="turn" evidence="15">
    <location>
        <begin position="194"/>
        <end position="197"/>
    </location>
</feature>
<feature type="strand" evidence="15">
    <location>
        <begin position="199"/>
        <end position="206"/>
    </location>
</feature>
<feature type="helix" evidence="15">
    <location>
        <begin position="215"/>
        <end position="218"/>
    </location>
</feature>
<feature type="strand" evidence="15">
    <location>
        <begin position="219"/>
        <end position="225"/>
    </location>
</feature>
<feature type="strand" evidence="15">
    <location>
        <begin position="231"/>
        <end position="236"/>
    </location>
</feature>
<feature type="strand" evidence="15">
    <location>
        <begin position="239"/>
        <end position="242"/>
    </location>
</feature>
<feature type="strand" evidence="15">
    <location>
        <begin position="247"/>
        <end position="258"/>
    </location>
</feature>
<feature type="helix" evidence="15">
    <location>
        <begin position="259"/>
        <end position="261"/>
    </location>
</feature>
<feature type="strand" evidence="15">
    <location>
        <begin position="262"/>
        <end position="265"/>
    </location>
</feature>
<feature type="helix" evidence="15">
    <location>
        <begin position="269"/>
        <end position="303"/>
    </location>
</feature>
<feature type="helix" evidence="15">
    <location>
        <begin position="313"/>
        <end position="315"/>
    </location>
</feature>
<feature type="helix" evidence="15">
    <location>
        <begin position="317"/>
        <end position="345"/>
    </location>
</feature>
<feature type="helix" evidence="15">
    <location>
        <begin position="351"/>
        <end position="376"/>
    </location>
</feature>
<feature type="helix" evidence="15">
    <location>
        <begin position="378"/>
        <end position="381"/>
    </location>
</feature>
<feature type="helix" evidence="15">
    <location>
        <begin position="387"/>
        <end position="394"/>
    </location>
</feature>
<feature type="helix" evidence="15">
    <location>
        <begin position="395"/>
        <end position="398"/>
    </location>
</feature>
<feature type="strand" evidence="15">
    <location>
        <begin position="400"/>
        <end position="402"/>
    </location>
</feature>
<feature type="helix" evidence="15">
    <location>
        <begin position="404"/>
        <end position="417"/>
    </location>
</feature>
<protein>
    <recommendedName>
        <fullName evidence="11">Medium-chain specific acyl-CoA dehydrogenase, mitochondrial</fullName>
        <shortName evidence="8">MCAD</shortName>
        <ecNumber evidence="5">1.3.8.7</ecNumber>
    </recommendedName>
</protein>
<gene>
    <name evidence="7" type="primary">ACADM</name>
</gene>
<reference key="1">
    <citation type="submission" date="1995-11" db="EMBL/GenBank/DDBJ databases">
        <authorList>
            <person name="Suzuki H."/>
            <person name="Kimura M."/>
            <person name="Ito T."/>
            <person name="Murakami Y."/>
            <person name="Hamasima N."/>
            <person name="Yasue H."/>
        </authorList>
    </citation>
    <scope>NUCLEOTIDE SEQUENCE [MRNA]</scope>
</reference>
<reference key="2">
    <citation type="submission" date="2004-08" db="EMBL/GenBank/DDBJ databases">
        <title>Mutation detection in the porcine ACADM gene.</title>
        <authorList>
            <person name="Jeon J.-T."/>
            <person name="Park J.-J."/>
            <person name="Kim J.-H."/>
            <person name="Lim H.-T."/>
            <person name="Seo B.-Y."/>
            <person name="Cho I.-C."/>
        </authorList>
    </citation>
    <scope>NUCLEOTIDE SEQUENCE [MRNA]</scope>
    <source>
        <tissue>Skeletal muscle</tissue>
    </source>
</reference>
<reference key="3">
    <citation type="journal article" date="1988" name="Biochemistry">
        <title>2-octynoyl coenzyme A is a mechanism-based inhibitor of pig kidney medium-chain acyl coenzyme A dehydrogenase: isolation of the target peptide.</title>
        <authorList>
            <person name="Powell P.J."/>
            <person name="Thorpe C."/>
        </authorList>
    </citation>
    <scope>PROTEIN SEQUENCE OF 396-408</scope>
    <scope>FUNCTION</scope>
    <scope>CATALYTIC ACTIVITY</scope>
    <scope>PATHWAY</scope>
    <scope>ACTIVE SITE</scope>
</reference>
<reference evidence="13 14" key="4">
    <citation type="journal article" date="1993" name="Proc. Natl. Acad. Sci. U.S.A.">
        <title>Crystal structures of medium-chain acyl-CoA dehydrogenase from pig liver mitochondria with and without substrate.</title>
        <authorList>
            <person name="Kim J.-J.P."/>
            <person name="Wang M."/>
            <person name="Paschke R."/>
        </authorList>
    </citation>
    <scope>X-RAY CRYSTALLOGRAPHY (2.4 ANGSTROMS) OF 36-420 IN COMPLEX WITH FAD AND OCTANOYL-COA</scope>
    <scope>COFACTOR</scope>
    <scope>SUBUNIT</scope>
    <scope>ACTIVE SITE</scope>
    <source>
        <tissue>Liver</tissue>
    </source>
</reference>
<reference evidence="12" key="5">
    <citation type="journal article" date="2003" name="J. Biochem.">
        <title>Structure of the transition state analog of medium-chain acyl-CoA dehydrogenase. Crystallographic and molecular orbital studies on the charge-transfer complex of medium-chain acyl-CoA dehydrogenase with 3-thiaoctanoyl-CoA.</title>
        <authorList>
            <person name="Satoh A."/>
            <person name="Nakajima Y."/>
            <person name="Miyahara I."/>
            <person name="Hirotsu K."/>
            <person name="Tanaka T."/>
            <person name="Nishina Y."/>
            <person name="Shiga K."/>
            <person name="Tamaoki H."/>
            <person name="Setoyama C."/>
            <person name="Miura R."/>
        </authorList>
    </citation>
    <scope>X-RAY CRYSTALLOGRAPHY (2.40 ANGSTROMS) OF 26-421 IN COMPLEX WITH FAD AND SUBSTRATE ANALOG 3-THIAOCTANOYL-COA</scope>
    <scope>COFACTOR</scope>
    <scope>ACTIVE SITE</scope>
</reference>